<sequence>MASVKFQPRGRSKGRVPLSLFAPLRVTDEKPLYKVLPNNAVPQGMGGKDQQIGYWVEQQRWRMRRGDRVDLPSNWHFYFLGTGPHSDLPFRKRTDGVFWVAIDGAKTQPTGLGVRKSSEKPLVPKFKNKLPNNVEIVEPTTPNNSRANSRSRSRGGQSNSRGNSQNRGDKSRNQSRNRSQSNDRGSDSRDDLVAAVKKALEDLGVGAAKPKGKTQSGKNTPKNKSRSGSVQRAEAKDKPEWRRTPSGDESVEVCFGPRGGTRNFGSSEFVAKGVNAPGYAQAASLVPGAAALLFGGNVATKEMADGVEITYTYKMLVPKDDKNLEIFLAQVDAYKLGDPKPQRKVKRSRTPTPKPATEPVYDDVAADPTYANLEWDTTVEDGVEMINEVFDTQN</sequence>
<proteinExistence type="evidence at protein level"/>
<name>NCAP_BC512</name>
<keyword id="KW-0013">ADP-ribosylation</keyword>
<keyword id="KW-1040">Host Golgi apparatus</keyword>
<keyword id="KW-0597">Phosphoprotein</keyword>
<keyword id="KW-0687">Ribonucleoprotein</keyword>
<keyword id="KW-0694">RNA-binding</keyword>
<keyword id="KW-0804">Transcription</keyword>
<keyword id="KW-0805">Transcription regulation</keyword>
<keyword id="KW-0543">Viral nucleoprotein</keyword>
<keyword id="KW-0946">Virion</keyword>
<evidence type="ECO:0000255" key="1">
    <source>
        <dbReference type="HAMAP-Rule" id="MF_04095"/>
    </source>
</evidence>
<evidence type="ECO:0000255" key="2">
    <source>
        <dbReference type="PROSITE-ProRule" id="PRU01276"/>
    </source>
</evidence>
<evidence type="ECO:0000255" key="3">
    <source>
        <dbReference type="PROSITE-ProRule" id="PRU01277"/>
    </source>
</evidence>
<evidence type="ECO:0000256" key="4">
    <source>
        <dbReference type="SAM" id="MobiDB-lite"/>
    </source>
</evidence>
<evidence type="ECO:0000269" key="5">
    <source>
    </source>
</evidence>
<organism>
    <name type="scientific">Bat coronavirus 512/2005</name>
    <name type="common">BtCoV</name>
    <name type="synonym">BtCoV/512/2005</name>
    <dbReference type="NCBI Taxonomy" id="693999"/>
    <lineage>
        <taxon>Viruses</taxon>
        <taxon>Riboviria</taxon>
        <taxon>Orthornavirae</taxon>
        <taxon>Pisuviricota</taxon>
        <taxon>Pisoniviricetes</taxon>
        <taxon>Nidovirales</taxon>
        <taxon>Cornidovirineae</taxon>
        <taxon>Coronaviridae</taxon>
        <taxon>Orthocoronavirinae</taxon>
        <taxon>Alphacoronavirus</taxon>
        <taxon>Pedacovirus</taxon>
        <taxon>Alphacoronavirus scotophili</taxon>
    </lineage>
</organism>
<accession>Q0Q462</accession>
<gene>
    <name evidence="1" type="primary">N</name>
    <name type="ORF">6</name>
</gene>
<comment type="function">
    <text evidence="1">Packages the positive strand viral genome RNA into a helical ribonucleocapsid (RNP) and plays a fundamental role during virion assembly through its interactions with the viral genome and membrane protein M. Plays an important role in enhancing the efficiency of subgenomic viral RNA transcription as well as viral replication.</text>
</comment>
<comment type="subunit">
    <text evidence="1">Homooligomer. Both monomeric and oligomeric forms interact with RNA. Interacts with protein M. Interacts with NSP3; this interaction serves to tether the genome to the newly translated replicase-transcriptase complex at a very early stage of infection.</text>
</comment>
<comment type="subcellular location">
    <subcellularLocation>
        <location evidence="1">Virion</location>
    </subcellularLocation>
    <subcellularLocation>
        <location evidence="1">Host endoplasmic reticulum-Golgi intermediate compartment</location>
    </subcellularLocation>
    <subcellularLocation>
        <location evidence="1">Host Golgi apparatus</location>
    </subcellularLocation>
    <text evidence="1">Located inside the virion, complexed with the viral RNA. Probably associates with ER-derived membranes where it participates in viral RNA synthesis and virus budding.</text>
</comment>
<comment type="PTM">
    <text evidence="1 5">ADP-ribosylated. The ADP-ribosylation is retained in the virion during infection.</text>
</comment>
<comment type="PTM">
    <text evidence="1">Phosphorylated on serine and threonine residues.</text>
</comment>
<comment type="miscellaneous">
    <text>Bat coronavirus 512/2005 is highly similar to porcine epidemic diarrhea virus (PEDV).</text>
</comment>
<comment type="similarity">
    <text evidence="1">Belongs to the alphacoronavirus nucleocapsid protein family.</text>
</comment>
<reference key="1">
    <citation type="journal article" date="2006" name="J. Virol.">
        <title>Prevalence and genetic diversity of coronaviruses in bats from China.</title>
        <authorList>
            <person name="Tang X.C."/>
            <person name="Zhang J.X."/>
            <person name="Zhang S.Y."/>
            <person name="Wang P."/>
            <person name="Fan X.H."/>
            <person name="Li L.F."/>
            <person name="Li G."/>
            <person name="Dong B.Q."/>
            <person name="Liu W."/>
            <person name="Cheung C.L."/>
            <person name="Xu K.M."/>
            <person name="Song W.J."/>
            <person name="Vijaykrishna D."/>
            <person name="Poon L.L.M."/>
            <person name="Peiris J.S.M."/>
            <person name="Smith G.J."/>
            <person name="Chen H."/>
            <person name="Guan Y."/>
        </authorList>
    </citation>
    <scope>NUCLEOTIDE SEQUENCE [GENOMIC RNA]</scope>
</reference>
<reference key="2">
    <citation type="journal article" date="2018" name="Virology">
        <title>The coronavirus nucleocapsid protein is ADP-ribosylated.</title>
        <authorList>
            <person name="Grunewald M.E."/>
            <person name="Fehr A.R."/>
            <person name="Athmer J."/>
            <person name="Perlman S."/>
        </authorList>
    </citation>
    <scope>ADP-RIBOSYLATION</scope>
</reference>
<organismHost>
    <name type="scientific">Scotophilus kuhlii</name>
    <name type="common">Lesser asiatic yellow bat</name>
    <dbReference type="NCBI Taxonomy" id="153297"/>
</organismHost>
<feature type="chain" id="PRO_0000289884" description="Nucleoprotein">
    <location>
        <begin position="1"/>
        <end position="394"/>
    </location>
</feature>
<feature type="domain" description="CoV N NTD" evidence="2">
    <location>
        <begin position="16"/>
        <end position="138"/>
    </location>
</feature>
<feature type="domain" description="CoV N CTD" evidence="3">
    <location>
        <begin position="228"/>
        <end position="342"/>
    </location>
</feature>
<feature type="region of interest" description="RNA-binding" evidence="1">
    <location>
        <begin position="18"/>
        <end position="148"/>
    </location>
</feature>
<feature type="region of interest" description="Disordered" evidence="4">
    <location>
        <begin position="109"/>
        <end position="190"/>
    </location>
</feature>
<feature type="region of interest" description="Disordered" evidence="4">
    <location>
        <begin position="203"/>
        <end position="254"/>
    </location>
</feature>
<feature type="region of interest" description="Dimerization" evidence="1">
    <location>
        <begin position="236"/>
        <end position="338"/>
    </location>
</feature>
<feature type="region of interest" description="Disordered" evidence="4">
    <location>
        <begin position="339"/>
        <end position="361"/>
    </location>
</feature>
<feature type="compositionally biased region" description="Low complexity" evidence="4">
    <location>
        <begin position="143"/>
        <end position="166"/>
    </location>
</feature>
<feature type="compositionally biased region" description="Low complexity" evidence="4">
    <location>
        <begin position="174"/>
        <end position="183"/>
    </location>
</feature>
<feature type="compositionally biased region" description="Polar residues" evidence="4">
    <location>
        <begin position="213"/>
        <end position="230"/>
    </location>
</feature>
<feature type="compositionally biased region" description="Basic and acidic residues" evidence="4">
    <location>
        <begin position="233"/>
        <end position="246"/>
    </location>
</feature>
<feature type="modified residue" description="Phosphoserine; by host" evidence="1">
    <location>
        <position position="145"/>
    </location>
</feature>
<dbReference type="EMBL" id="DQ648858">
    <property type="protein sequence ID" value="ABG47082.1"/>
    <property type="molecule type" value="Genomic_RNA"/>
</dbReference>
<dbReference type="RefSeq" id="YP_001351688.1">
    <property type="nucleotide sequence ID" value="NC_009657.1"/>
</dbReference>
<dbReference type="SMR" id="Q0Q462"/>
<dbReference type="KEGG" id="vg:11266522"/>
<dbReference type="OrthoDB" id="3036at10239"/>
<dbReference type="Proteomes" id="UP000113079">
    <property type="component" value="Genome"/>
</dbReference>
<dbReference type="GO" id="GO:0044172">
    <property type="term" value="C:host cell endoplasmic reticulum-Golgi intermediate compartment"/>
    <property type="evidence" value="ECO:0007669"/>
    <property type="project" value="UniProtKB-SubCell"/>
</dbReference>
<dbReference type="GO" id="GO:0044177">
    <property type="term" value="C:host cell Golgi apparatus"/>
    <property type="evidence" value="ECO:0007669"/>
    <property type="project" value="UniProtKB-SubCell"/>
</dbReference>
<dbReference type="GO" id="GO:1990904">
    <property type="term" value="C:ribonucleoprotein complex"/>
    <property type="evidence" value="ECO:0007669"/>
    <property type="project" value="UniProtKB-KW"/>
</dbReference>
<dbReference type="GO" id="GO:0019013">
    <property type="term" value="C:viral nucleocapsid"/>
    <property type="evidence" value="ECO:0007669"/>
    <property type="project" value="UniProtKB-KW"/>
</dbReference>
<dbReference type="GO" id="GO:0003723">
    <property type="term" value="F:RNA binding"/>
    <property type="evidence" value="ECO:0007669"/>
    <property type="project" value="UniProtKB-KW"/>
</dbReference>
<dbReference type="CDD" id="cd21595">
    <property type="entry name" value="CoV_N-CTD"/>
    <property type="match status" value="1"/>
</dbReference>
<dbReference type="CDD" id="cd21554">
    <property type="entry name" value="CoV_N-NTD"/>
    <property type="match status" value="1"/>
</dbReference>
<dbReference type="HAMAP" id="MF_04095">
    <property type="entry name" value="ALPHA_CORONA_NCAP"/>
    <property type="match status" value="1"/>
</dbReference>
<dbReference type="InterPro" id="IPR044344">
    <property type="entry name" value="N_prot_C_CoV"/>
</dbReference>
<dbReference type="InterPro" id="IPR044345">
    <property type="entry name" value="N_prot_N_CoV"/>
</dbReference>
<dbReference type="InterPro" id="IPR042548">
    <property type="entry name" value="NCAP_aCoV"/>
</dbReference>
<dbReference type="InterPro" id="IPR001218">
    <property type="entry name" value="Nucleocap_CoV"/>
</dbReference>
<dbReference type="InterPro" id="IPR037179">
    <property type="entry name" value="Nucleocapsid_C"/>
</dbReference>
<dbReference type="InterPro" id="IPR037195">
    <property type="entry name" value="Nucleocapsid_N"/>
</dbReference>
<dbReference type="Pfam" id="PF00937">
    <property type="entry name" value="CoV_nucleocap"/>
    <property type="match status" value="1"/>
</dbReference>
<dbReference type="PIRSF" id="PIRSF003888">
    <property type="entry name" value="Corona_nucleocap"/>
    <property type="match status" value="1"/>
</dbReference>
<dbReference type="SUPFAM" id="SSF110304">
    <property type="entry name" value="Coronavirus RNA-binding domain"/>
    <property type="match status" value="1"/>
</dbReference>
<dbReference type="SUPFAM" id="SSF103068">
    <property type="entry name" value="Nucleocapsid protein dimerization domain"/>
    <property type="match status" value="1"/>
</dbReference>
<dbReference type="PROSITE" id="PS51929">
    <property type="entry name" value="COV_N_CTD"/>
    <property type="match status" value="1"/>
</dbReference>
<dbReference type="PROSITE" id="PS51928">
    <property type="entry name" value="COV_N_NTD"/>
    <property type="match status" value="1"/>
</dbReference>
<protein>
    <recommendedName>
        <fullName evidence="1">Nucleoprotein</fullName>
    </recommendedName>
    <alternativeName>
        <fullName evidence="1">Nucleocapsid protein</fullName>
        <shortName evidence="1">NC</shortName>
        <shortName evidence="1">Protein N</shortName>
    </alternativeName>
</protein>